<comment type="function">
    <text evidence="1">Component of the coat protein complex II (COPII) which promotes the formation of transport vesicles from the endoplasmic reticulum (ER). The coat has two main functions, the physical deformation of the endoplasmic reticulum membrane into vesicles and the selection of cargo molecules (By similarity).</text>
</comment>
<comment type="subunit">
    <text evidence="1">The COPII coat is composed of at least 5 proteins: the SEC23/24 complex, the SEC13/31 complex, and the protein SAR1. SEC13 and SEC31 make a 2:2 tetramer that forms the edge element of the COPII outer coat. The tetramer self-assembles in multiple copies to form the complete polyhedral cage. Interacts (via WD 8) with SEC13 (By similarity).</text>
</comment>
<comment type="subcellular location">
    <subcellularLocation>
        <location evidence="1">Cytoplasmic vesicle</location>
        <location evidence="1">COPII-coated vesicle membrane</location>
        <topology evidence="1">Peripheral membrane protein</topology>
        <orientation evidence="1">Cytoplasmic side</orientation>
    </subcellularLocation>
    <subcellularLocation>
        <location evidence="1">Endoplasmic reticulum membrane</location>
        <topology evidence="1">Peripheral membrane protein</topology>
        <orientation evidence="1">Cytoplasmic side</orientation>
    </subcellularLocation>
</comment>
<comment type="similarity">
    <text evidence="4">Belongs to the WD repeat SEC31 family.</text>
</comment>
<accession>Q1DX43</accession>
<accession>A0A0D8JUX1</accession>
<accession>I9NNL8</accession>
<organism>
    <name type="scientific">Coccidioides immitis (strain RS)</name>
    <name type="common">Valley fever fungus</name>
    <dbReference type="NCBI Taxonomy" id="246410"/>
    <lineage>
        <taxon>Eukaryota</taxon>
        <taxon>Fungi</taxon>
        <taxon>Dikarya</taxon>
        <taxon>Ascomycota</taxon>
        <taxon>Pezizomycotina</taxon>
        <taxon>Eurotiomycetes</taxon>
        <taxon>Eurotiomycetidae</taxon>
        <taxon>Onygenales</taxon>
        <taxon>Onygenaceae</taxon>
        <taxon>Coccidioides</taxon>
    </lineage>
</organism>
<name>SEC31_COCIM</name>
<reference key="1">
    <citation type="journal article" date="2009" name="Genome Res.">
        <title>Comparative genomic analyses of the human fungal pathogens Coccidioides and their relatives.</title>
        <authorList>
            <person name="Sharpton T.J."/>
            <person name="Stajich J.E."/>
            <person name="Rounsley S.D."/>
            <person name="Gardner M.J."/>
            <person name="Wortman J.R."/>
            <person name="Jordar V.S."/>
            <person name="Maiti R."/>
            <person name="Kodira C.D."/>
            <person name="Neafsey D.E."/>
            <person name="Zeng Q."/>
            <person name="Hung C.-Y."/>
            <person name="McMahan C."/>
            <person name="Muszewska A."/>
            <person name="Grynberg M."/>
            <person name="Mandel M.A."/>
            <person name="Kellner E.M."/>
            <person name="Barker B.M."/>
            <person name="Galgiani J.N."/>
            <person name="Orbach M.J."/>
            <person name="Kirkland T.N."/>
            <person name="Cole G.T."/>
            <person name="Henn M.R."/>
            <person name="Birren B.W."/>
            <person name="Taylor J.W."/>
        </authorList>
    </citation>
    <scope>NUCLEOTIDE SEQUENCE [LARGE SCALE GENOMIC DNA]</scope>
    <source>
        <strain>RS</strain>
    </source>
</reference>
<reference key="2">
    <citation type="journal article" date="2010" name="Genome Res.">
        <title>Population genomic sequencing of Coccidioides fungi reveals recent hybridization and transposon control.</title>
        <authorList>
            <person name="Neafsey D.E."/>
            <person name="Barker B.M."/>
            <person name="Sharpton T.J."/>
            <person name="Stajich J.E."/>
            <person name="Park D.J."/>
            <person name="Whiston E."/>
            <person name="Hung C.-Y."/>
            <person name="McMahan C."/>
            <person name="White J."/>
            <person name="Sykes S."/>
            <person name="Heiman D."/>
            <person name="Young S."/>
            <person name="Zeng Q."/>
            <person name="Abouelleil A."/>
            <person name="Aftuck L."/>
            <person name="Bessette D."/>
            <person name="Brown A."/>
            <person name="FitzGerald M."/>
            <person name="Lui A."/>
            <person name="Macdonald J.P."/>
            <person name="Priest M."/>
            <person name="Orbach M.J."/>
            <person name="Galgiani J.N."/>
            <person name="Kirkland T.N."/>
            <person name="Cole G.T."/>
            <person name="Birren B.W."/>
            <person name="Henn M.R."/>
            <person name="Taylor J.W."/>
            <person name="Rounsley S.D."/>
        </authorList>
    </citation>
    <scope>GENOME REANNOTATION</scope>
    <source>
        <strain>RS</strain>
    </source>
</reference>
<proteinExistence type="inferred from homology"/>
<evidence type="ECO:0000250" key="1"/>
<evidence type="ECO:0000255" key="2">
    <source>
        <dbReference type="PROSITE-ProRule" id="PRU00221"/>
    </source>
</evidence>
<evidence type="ECO:0000256" key="3">
    <source>
        <dbReference type="SAM" id="MobiDB-lite"/>
    </source>
</evidence>
<evidence type="ECO:0000305" key="4"/>
<feature type="chain" id="PRO_0000295435" description="Protein transport protein SEC31">
    <location>
        <begin position="1"/>
        <end position="1261"/>
    </location>
</feature>
<feature type="repeat" description="WD 1">
    <location>
        <begin position="5"/>
        <end position="47"/>
    </location>
</feature>
<feature type="repeat" description="WD 2">
    <location>
        <begin position="66"/>
        <end position="109"/>
    </location>
</feature>
<feature type="repeat" description="WD 3">
    <location>
        <begin position="118"/>
        <end position="158"/>
    </location>
</feature>
<feature type="repeat" description="WD 4">
    <location>
        <begin position="164"/>
        <end position="204"/>
    </location>
</feature>
<feature type="repeat" description="WD 5">
    <location>
        <begin position="208"/>
        <end position="251"/>
    </location>
</feature>
<feature type="repeat" description="WD 6">
    <location>
        <begin position="255"/>
        <end position="295"/>
    </location>
</feature>
<feature type="repeat" description="WD 7">
    <location>
        <begin position="298"/>
        <end position="338"/>
    </location>
</feature>
<feature type="repeat" description="WD 8; interaction with SEC13" evidence="2">
    <location>
        <begin position="382"/>
        <end position="406"/>
    </location>
</feature>
<feature type="region of interest" description="Disordered" evidence="3">
    <location>
        <begin position="797"/>
        <end position="1156"/>
    </location>
</feature>
<feature type="compositionally biased region" description="Low complexity" evidence="3">
    <location>
        <begin position="852"/>
        <end position="879"/>
    </location>
</feature>
<feature type="compositionally biased region" description="Pro residues" evidence="3">
    <location>
        <begin position="889"/>
        <end position="911"/>
    </location>
</feature>
<feature type="compositionally biased region" description="Low complexity" evidence="3">
    <location>
        <begin position="912"/>
        <end position="922"/>
    </location>
</feature>
<feature type="compositionally biased region" description="Polar residues" evidence="3">
    <location>
        <begin position="946"/>
        <end position="974"/>
    </location>
</feature>
<feature type="compositionally biased region" description="Pro residues" evidence="3">
    <location>
        <begin position="975"/>
        <end position="1001"/>
    </location>
</feature>
<feature type="compositionally biased region" description="Pro residues" evidence="3">
    <location>
        <begin position="1039"/>
        <end position="1061"/>
    </location>
</feature>
<feature type="compositionally biased region" description="Pro residues" evidence="3">
    <location>
        <begin position="1081"/>
        <end position="1099"/>
    </location>
</feature>
<feature type="compositionally biased region" description="Low complexity" evidence="3">
    <location>
        <begin position="1100"/>
        <end position="1110"/>
    </location>
</feature>
<feature type="compositionally biased region" description="Pro residues" evidence="3">
    <location>
        <begin position="1111"/>
        <end position="1125"/>
    </location>
</feature>
<feature type="compositionally biased region" description="Low complexity" evidence="3">
    <location>
        <begin position="1135"/>
        <end position="1148"/>
    </location>
</feature>
<gene>
    <name type="primary">SEC31</name>
    <name type="ORF">CIMG_05120</name>
</gene>
<keyword id="KW-0968">Cytoplasmic vesicle</keyword>
<keyword id="KW-0256">Endoplasmic reticulum</keyword>
<keyword id="KW-0931">ER-Golgi transport</keyword>
<keyword id="KW-0472">Membrane</keyword>
<keyword id="KW-0653">Protein transport</keyword>
<keyword id="KW-1185">Reference proteome</keyword>
<keyword id="KW-0677">Repeat</keyword>
<keyword id="KW-0813">Transport</keyword>
<keyword id="KW-0853">WD repeat</keyword>
<dbReference type="EMBL" id="GG704914">
    <property type="protein sequence ID" value="KJF61105.1"/>
    <property type="molecule type" value="Genomic_DNA"/>
</dbReference>
<dbReference type="RefSeq" id="XP_004446159.1">
    <property type="nucleotide sequence ID" value="XM_004446102.1"/>
</dbReference>
<dbReference type="SMR" id="Q1DX43"/>
<dbReference type="FunCoup" id="Q1DX43">
    <property type="interactions" value="712"/>
</dbReference>
<dbReference type="STRING" id="246410.Q1DX43"/>
<dbReference type="GeneID" id="4563783"/>
<dbReference type="KEGG" id="cim:CIMG_05120"/>
<dbReference type="VEuPathDB" id="FungiDB:CIMG_05120"/>
<dbReference type="InParanoid" id="Q1DX43"/>
<dbReference type="OrthoDB" id="542917at2759"/>
<dbReference type="Proteomes" id="UP000001261">
    <property type="component" value="Unassembled WGS sequence"/>
</dbReference>
<dbReference type="GO" id="GO:0030127">
    <property type="term" value="C:COPII vesicle coat"/>
    <property type="evidence" value="ECO:0007669"/>
    <property type="project" value="TreeGrafter"/>
</dbReference>
<dbReference type="GO" id="GO:0070971">
    <property type="term" value="C:endoplasmic reticulum exit site"/>
    <property type="evidence" value="ECO:0007669"/>
    <property type="project" value="TreeGrafter"/>
</dbReference>
<dbReference type="GO" id="GO:0005789">
    <property type="term" value="C:endoplasmic reticulum membrane"/>
    <property type="evidence" value="ECO:0007669"/>
    <property type="project" value="UniProtKB-SubCell"/>
</dbReference>
<dbReference type="GO" id="GO:0005198">
    <property type="term" value="F:structural molecule activity"/>
    <property type="evidence" value="ECO:0007669"/>
    <property type="project" value="TreeGrafter"/>
</dbReference>
<dbReference type="GO" id="GO:0090110">
    <property type="term" value="P:COPII-coated vesicle cargo loading"/>
    <property type="evidence" value="ECO:0007669"/>
    <property type="project" value="TreeGrafter"/>
</dbReference>
<dbReference type="GO" id="GO:0007029">
    <property type="term" value="P:endoplasmic reticulum organization"/>
    <property type="evidence" value="ECO:0007669"/>
    <property type="project" value="TreeGrafter"/>
</dbReference>
<dbReference type="GO" id="GO:0015031">
    <property type="term" value="P:protein transport"/>
    <property type="evidence" value="ECO:0007669"/>
    <property type="project" value="UniProtKB-KW"/>
</dbReference>
<dbReference type="FunFam" id="1.20.940.10:FF:000007">
    <property type="entry name" value="Protein transport protein (SEC31), putative"/>
    <property type="match status" value="1"/>
</dbReference>
<dbReference type="FunFam" id="2.130.10.10:FF:000193">
    <property type="entry name" value="Protein transport protein SEC31, putative"/>
    <property type="match status" value="1"/>
</dbReference>
<dbReference type="Gene3D" id="1.25.40.1030">
    <property type="match status" value="1"/>
</dbReference>
<dbReference type="Gene3D" id="1.20.940.10">
    <property type="entry name" value="Functional domain of the splicing factor Prp18"/>
    <property type="match status" value="1"/>
</dbReference>
<dbReference type="Gene3D" id="2.130.10.10">
    <property type="entry name" value="YVTN repeat-like/Quinoprotein amine dehydrogenase"/>
    <property type="match status" value="1"/>
</dbReference>
<dbReference type="InterPro" id="IPR024298">
    <property type="entry name" value="Sec16_Sec23-bd"/>
</dbReference>
<dbReference type="InterPro" id="IPR040251">
    <property type="entry name" value="SEC31-like"/>
</dbReference>
<dbReference type="InterPro" id="IPR009917">
    <property type="entry name" value="SRA1/Sec31"/>
</dbReference>
<dbReference type="InterPro" id="IPR015943">
    <property type="entry name" value="WD40/YVTN_repeat-like_dom_sf"/>
</dbReference>
<dbReference type="InterPro" id="IPR036322">
    <property type="entry name" value="WD40_repeat_dom_sf"/>
</dbReference>
<dbReference type="InterPro" id="IPR001680">
    <property type="entry name" value="WD40_rpt"/>
</dbReference>
<dbReference type="PANTHER" id="PTHR13923">
    <property type="entry name" value="SEC31-RELATED PROTEIN"/>
    <property type="match status" value="1"/>
</dbReference>
<dbReference type="PANTHER" id="PTHR13923:SF11">
    <property type="entry name" value="SECRETORY 31, ISOFORM D"/>
    <property type="match status" value="1"/>
</dbReference>
<dbReference type="Pfam" id="PF07304">
    <property type="entry name" value="SRA1"/>
    <property type="match status" value="1"/>
</dbReference>
<dbReference type="Pfam" id="PF12931">
    <property type="entry name" value="TPR_Sec16"/>
    <property type="match status" value="1"/>
</dbReference>
<dbReference type="Pfam" id="PF00400">
    <property type="entry name" value="WD40"/>
    <property type="match status" value="1"/>
</dbReference>
<dbReference type="SMART" id="SM00320">
    <property type="entry name" value="WD40"/>
    <property type="match status" value="6"/>
</dbReference>
<dbReference type="SUPFAM" id="SSF50978">
    <property type="entry name" value="WD40 repeat-like"/>
    <property type="match status" value="1"/>
</dbReference>
<dbReference type="PROSITE" id="PS50082">
    <property type="entry name" value="WD_REPEATS_2"/>
    <property type="match status" value="1"/>
</dbReference>
<dbReference type="PROSITE" id="PS50294">
    <property type="entry name" value="WD_REPEATS_REGION"/>
    <property type="match status" value="1"/>
</dbReference>
<sequence>MVRLREIPRTATFTWSPGSAAPFIATGTRAGAVDADFSNETFLELWNLDLDNDKLGQELEPVAKISTESGFHDIAWAESEDHTRGVIAGALENGSLDLWDADKLLNGASDALISSASKHTGPIKALQFNPRHSNLLATGGGKGELFISDLNNVDQAFRLGSGAARVDDIECLDWNKKVPHILVTGSSAGFVTVWDVKTKKESLTLNNLGRKAVSAVAWDPEKPTKLITSIPLETDPLILVWDLRNSNAPERVLRGHESGVLSLSWCAQDPDLLLSCGKDNRTICWNPQTGNAYGEFPVVTNWTFQTRWNPHNPNMFATASFDGKIVVQTIQNTRQDASQAGNNQEQAVNDEDFFAKAQTRPQISTFSLPKAPKWLERPVTASFGFGGRVVSAGLSSGSRSSKITISHFDVDPNVGSATENFESSVKTGDFRGICESRIASSQCEEEKTDWKVIETLLSDNPRKQLVNYLGFSNEVDEAADSLSKLGLDKKEANGEGQLSPKSEGVKKHKRITSIFETNVEGESFLDEIASSKGAKTNNPFQIYTGSESEADRAITRALLLGQFEKALDVCLQEDRMSDAFMVAVCGGQKCIEKAQEAYFSKQSEGPSFVRLLASVVGKNLWDVVHNAGLANWKEAIAAICTFADDKEFPDLCEALGDRLEESYRSKKAKQARKDASFCYLASSKLEKVVSIWIQELKENEAYSIQNATDDTSFSIHVRALQSFIEKVTVFRHVSKFQDPERQKSSDWKLSSLYEKYLEYADVVASHGRLDVAEKYLDLLPASYPEAEVARSRIQFATKKPASKAATGRAPAPRHPPTAPTLTGTFQPAQIPTHKGPAPGSVNQFAPPALSKPTNPYAPTTTTSYTSAGGTTYTPTTGYQPPQPRQSNVIPPPQPLAPPPQSGPAGLAPPPRASSQSPSVAAPYTRATNIPAWNDLPEGFGRAATPRRSTPVTGSSVISSPFPNTPSLTQPGSHTSPPPSTMPAPRDSVPPPPPKGPAPPRMASPSTAGIPHGLQPAERPPSRTHVYSPPLAQQTSPGMAVPPPIPRGPSPYNAPPTVPPPTNRYAPAQVSQPTGQLHGQPPIAPPPHSSMPPPPGPYAPQPFQQAPAQSPYAPPPTGPQAPPPPVSQQGSRPSTAQSQKKAPPAQKYPPGDRSHIPANAQPIYEILSSDMQRVKARAPAAFKAQVNDTERRLNILFDHLNNEDLLQPSTIESMAELAHAIQVKDYETAQAIHLDILTNKTDECGNWMVGVKRLIGMSRATP</sequence>
<protein>
    <recommendedName>
        <fullName>Protein transport protein SEC31</fullName>
    </recommendedName>
</protein>